<protein>
    <recommendedName>
        <fullName evidence="1">S-ribosylhomocysteine lyase</fullName>
        <ecNumber evidence="1">4.4.1.21</ecNumber>
    </recommendedName>
    <alternativeName>
        <fullName evidence="1">AI-2 synthesis protein</fullName>
    </alternativeName>
    <alternativeName>
        <fullName evidence="1">Autoinducer-2 production protein LuxS</fullName>
    </alternativeName>
</protein>
<sequence>MPSVESFELDHTIVKAPYVRHCGVHNVGSDGIVNKFDIRFCQPNKQAMKPDVIHTLEHLLAFNLRKYIDRYPHFDIIDISPMGCQTGYYLVVSGTPTVREIIDLLELTLKDAVQITEIPAANETQCGQAKLHDLEGAQRLMNFWLSQDKDELEKVFG</sequence>
<feature type="chain" id="PRO_1000117213" description="S-ribosylhomocysteine lyase">
    <location>
        <begin position="1"/>
        <end position="157"/>
    </location>
</feature>
<feature type="binding site" evidence="1">
    <location>
        <position position="54"/>
    </location>
    <ligand>
        <name>Fe cation</name>
        <dbReference type="ChEBI" id="CHEBI:24875"/>
    </ligand>
</feature>
<feature type="binding site" evidence="1">
    <location>
        <position position="58"/>
    </location>
    <ligand>
        <name>Fe cation</name>
        <dbReference type="ChEBI" id="CHEBI:24875"/>
    </ligand>
</feature>
<feature type="binding site" evidence="1">
    <location>
        <position position="126"/>
    </location>
    <ligand>
        <name>Fe cation</name>
        <dbReference type="ChEBI" id="CHEBI:24875"/>
    </ligand>
</feature>
<accession>B7ILV4</accession>
<keyword id="KW-0071">Autoinducer synthesis</keyword>
<keyword id="KW-0408">Iron</keyword>
<keyword id="KW-0456">Lyase</keyword>
<keyword id="KW-0479">Metal-binding</keyword>
<keyword id="KW-0673">Quorum sensing</keyword>
<reference key="1">
    <citation type="submission" date="2008-10" db="EMBL/GenBank/DDBJ databases">
        <title>Genome sequence of Bacillus cereus G9842.</title>
        <authorList>
            <person name="Dodson R.J."/>
            <person name="Durkin A.S."/>
            <person name="Rosovitz M.J."/>
            <person name="Rasko D.A."/>
            <person name="Hoffmaster A."/>
            <person name="Ravel J."/>
            <person name="Sutton G."/>
        </authorList>
    </citation>
    <scope>NUCLEOTIDE SEQUENCE [LARGE SCALE GENOMIC DNA]</scope>
    <source>
        <strain>G9842</strain>
    </source>
</reference>
<gene>
    <name evidence="1" type="primary">luxS</name>
    <name type="ordered locus">BCG9842_B0322</name>
</gene>
<proteinExistence type="inferred from homology"/>
<dbReference type="EC" id="4.4.1.21" evidence="1"/>
<dbReference type="EMBL" id="CP001186">
    <property type="protein sequence ID" value="ACK95123.1"/>
    <property type="molecule type" value="Genomic_DNA"/>
</dbReference>
<dbReference type="RefSeq" id="WP_001141371.1">
    <property type="nucleotide sequence ID" value="NC_011772.1"/>
</dbReference>
<dbReference type="SMR" id="B7ILV4"/>
<dbReference type="GeneID" id="92884602"/>
<dbReference type="KEGG" id="bcg:BCG9842_B0322"/>
<dbReference type="HOGENOM" id="CLU_107531_2_0_9"/>
<dbReference type="Proteomes" id="UP000006744">
    <property type="component" value="Chromosome"/>
</dbReference>
<dbReference type="GO" id="GO:0005506">
    <property type="term" value="F:iron ion binding"/>
    <property type="evidence" value="ECO:0007669"/>
    <property type="project" value="InterPro"/>
</dbReference>
<dbReference type="GO" id="GO:0043768">
    <property type="term" value="F:S-ribosylhomocysteine lyase activity"/>
    <property type="evidence" value="ECO:0007669"/>
    <property type="project" value="UniProtKB-UniRule"/>
</dbReference>
<dbReference type="GO" id="GO:0009372">
    <property type="term" value="P:quorum sensing"/>
    <property type="evidence" value="ECO:0007669"/>
    <property type="project" value="UniProtKB-UniRule"/>
</dbReference>
<dbReference type="Gene3D" id="3.30.1360.80">
    <property type="entry name" value="S-ribosylhomocysteinase (LuxS)"/>
    <property type="match status" value="1"/>
</dbReference>
<dbReference type="HAMAP" id="MF_00091">
    <property type="entry name" value="LuxS"/>
    <property type="match status" value="1"/>
</dbReference>
<dbReference type="InterPro" id="IPR037005">
    <property type="entry name" value="LuxS_sf"/>
</dbReference>
<dbReference type="InterPro" id="IPR011249">
    <property type="entry name" value="Metalloenz_LuxS/M16"/>
</dbReference>
<dbReference type="InterPro" id="IPR003815">
    <property type="entry name" value="S-ribosylhomocysteinase"/>
</dbReference>
<dbReference type="NCBIfam" id="NF002603">
    <property type="entry name" value="PRK02260.1-3"/>
    <property type="match status" value="1"/>
</dbReference>
<dbReference type="PANTHER" id="PTHR35799">
    <property type="entry name" value="S-RIBOSYLHOMOCYSTEINE LYASE"/>
    <property type="match status" value="1"/>
</dbReference>
<dbReference type="PANTHER" id="PTHR35799:SF1">
    <property type="entry name" value="S-RIBOSYLHOMOCYSTEINE LYASE"/>
    <property type="match status" value="1"/>
</dbReference>
<dbReference type="Pfam" id="PF02664">
    <property type="entry name" value="LuxS"/>
    <property type="match status" value="1"/>
</dbReference>
<dbReference type="PIRSF" id="PIRSF006160">
    <property type="entry name" value="AI2"/>
    <property type="match status" value="1"/>
</dbReference>
<dbReference type="PRINTS" id="PR01487">
    <property type="entry name" value="LUXSPROTEIN"/>
</dbReference>
<dbReference type="SUPFAM" id="SSF63411">
    <property type="entry name" value="LuxS/MPP-like metallohydrolase"/>
    <property type="match status" value="1"/>
</dbReference>
<evidence type="ECO:0000255" key="1">
    <source>
        <dbReference type="HAMAP-Rule" id="MF_00091"/>
    </source>
</evidence>
<name>LUXS_BACC2</name>
<comment type="function">
    <text evidence="1">Involved in the synthesis of autoinducer 2 (AI-2) which is secreted by bacteria and is used to communicate both the cell density and the metabolic potential of the environment. The regulation of gene expression in response to changes in cell density is called quorum sensing. Catalyzes the transformation of S-ribosylhomocysteine (RHC) to homocysteine (HC) and 4,5-dihydroxy-2,3-pentadione (DPD).</text>
</comment>
<comment type="catalytic activity">
    <reaction evidence="1">
        <text>S-(5-deoxy-D-ribos-5-yl)-L-homocysteine = (S)-4,5-dihydroxypentane-2,3-dione + L-homocysteine</text>
        <dbReference type="Rhea" id="RHEA:17753"/>
        <dbReference type="ChEBI" id="CHEBI:29484"/>
        <dbReference type="ChEBI" id="CHEBI:58195"/>
        <dbReference type="ChEBI" id="CHEBI:58199"/>
        <dbReference type="EC" id="4.4.1.21"/>
    </reaction>
</comment>
<comment type="cofactor">
    <cofactor evidence="1">
        <name>Fe cation</name>
        <dbReference type="ChEBI" id="CHEBI:24875"/>
    </cofactor>
    <text evidence="1">Binds 1 Fe cation per subunit.</text>
</comment>
<comment type="subunit">
    <text evidence="1">Homodimer.</text>
</comment>
<comment type="similarity">
    <text evidence="1">Belongs to the LuxS family.</text>
</comment>
<organism>
    <name type="scientific">Bacillus cereus (strain G9842)</name>
    <dbReference type="NCBI Taxonomy" id="405531"/>
    <lineage>
        <taxon>Bacteria</taxon>
        <taxon>Bacillati</taxon>
        <taxon>Bacillota</taxon>
        <taxon>Bacilli</taxon>
        <taxon>Bacillales</taxon>
        <taxon>Bacillaceae</taxon>
        <taxon>Bacillus</taxon>
        <taxon>Bacillus cereus group</taxon>
    </lineage>
</organism>